<keyword id="KW-0143">Chaperone</keyword>
<keyword id="KW-0963">Cytoplasm</keyword>
<keyword id="KW-1015">Disulfide bond</keyword>
<keyword id="KW-0676">Redox-active center</keyword>
<keyword id="KW-0862">Zinc</keyword>
<accession>C3K4J4</accession>
<comment type="function">
    <text evidence="1">Redox regulated molecular chaperone. Protects both thermally unfolding and oxidatively damaged proteins from irreversible aggregation. Plays an important role in the bacterial defense system toward oxidative stress.</text>
</comment>
<comment type="subcellular location">
    <subcellularLocation>
        <location evidence="1">Cytoplasm</location>
    </subcellularLocation>
</comment>
<comment type="PTM">
    <text evidence="1">Under oxidizing conditions two disulfide bonds are formed involving the reactive cysteines. Under reducing conditions zinc is bound to the reactive cysteines and the protein is inactive.</text>
</comment>
<comment type="similarity">
    <text evidence="1">Belongs to the HSP33 family.</text>
</comment>
<organism>
    <name type="scientific">Pseudomonas fluorescens (strain SBW25)</name>
    <dbReference type="NCBI Taxonomy" id="216595"/>
    <lineage>
        <taxon>Bacteria</taxon>
        <taxon>Pseudomonadati</taxon>
        <taxon>Pseudomonadota</taxon>
        <taxon>Gammaproteobacteria</taxon>
        <taxon>Pseudomonadales</taxon>
        <taxon>Pseudomonadaceae</taxon>
        <taxon>Pseudomonas</taxon>
    </lineage>
</organism>
<name>HSLO_PSEFS</name>
<dbReference type="EMBL" id="AM181176">
    <property type="protein sequence ID" value="CAY46545.1"/>
    <property type="molecule type" value="Genomic_DNA"/>
</dbReference>
<dbReference type="RefSeq" id="WP_012721691.1">
    <property type="nucleotide sequence ID" value="NC_012660.1"/>
</dbReference>
<dbReference type="SMR" id="C3K4J4"/>
<dbReference type="STRING" id="294.SRM1_00318"/>
<dbReference type="GeneID" id="93461819"/>
<dbReference type="eggNOG" id="COG1281">
    <property type="taxonomic scope" value="Bacteria"/>
</dbReference>
<dbReference type="HOGENOM" id="CLU_054493_0_0_6"/>
<dbReference type="OrthoDB" id="9793753at2"/>
<dbReference type="GO" id="GO:0005737">
    <property type="term" value="C:cytoplasm"/>
    <property type="evidence" value="ECO:0007669"/>
    <property type="project" value="UniProtKB-SubCell"/>
</dbReference>
<dbReference type="GO" id="GO:0044183">
    <property type="term" value="F:protein folding chaperone"/>
    <property type="evidence" value="ECO:0007669"/>
    <property type="project" value="TreeGrafter"/>
</dbReference>
<dbReference type="GO" id="GO:0051082">
    <property type="term" value="F:unfolded protein binding"/>
    <property type="evidence" value="ECO:0007669"/>
    <property type="project" value="UniProtKB-UniRule"/>
</dbReference>
<dbReference type="GO" id="GO:0042026">
    <property type="term" value="P:protein refolding"/>
    <property type="evidence" value="ECO:0007669"/>
    <property type="project" value="TreeGrafter"/>
</dbReference>
<dbReference type="CDD" id="cd00498">
    <property type="entry name" value="Hsp33"/>
    <property type="match status" value="1"/>
</dbReference>
<dbReference type="Gene3D" id="1.10.287.480">
    <property type="entry name" value="helix hairpin bin"/>
    <property type="match status" value="1"/>
</dbReference>
<dbReference type="Gene3D" id="3.55.30.10">
    <property type="entry name" value="Hsp33 domain"/>
    <property type="match status" value="1"/>
</dbReference>
<dbReference type="Gene3D" id="3.90.1280.10">
    <property type="entry name" value="HSP33 redox switch-like"/>
    <property type="match status" value="1"/>
</dbReference>
<dbReference type="HAMAP" id="MF_00117">
    <property type="entry name" value="HslO"/>
    <property type="match status" value="1"/>
</dbReference>
<dbReference type="InterPro" id="IPR000397">
    <property type="entry name" value="Heat_shock_Hsp33"/>
</dbReference>
<dbReference type="InterPro" id="IPR016154">
    <property type="entry name" value="Heat_shock_Hsp33_C"/>
</dbReference>
<dbReference type="InterPro" id="IPR016153">
    <property type="entry name" value="Heat_shock_Hsp33_N"/>
</dbReference>
<dbReference type="InterPro" id="IPR023212">
    <property type="entry name" value="Hsp33_helix_hairpin_bin_dom_sf"/>
</dbReference>
<dbReference type="NCBIfam" id="NF001033">
    <property type="entry name" value="PRK00114.1"/>
    <property type="match status" value="1"/>
</dbReference>
<dbReference type="PANTHER" id="PTHR30111">
    <property type="entry name" value="33 KDA CHAPERONIN"/>
    <property type="match status" value="1"/>
</dbReference>
<dbReference type="PANTHER" id="PTHR30111:SF1">
    <property type="entry name" value="33 KDA CHAPERONIN"/>
    <property type="match status" value="1"/>
</dbReference>
<dbReference type="Pfam" id="PF01430">
    <property type="entry name" value="HSP33"/>
    <property type="match status" value="1"/>
</dbReference>
<dbReference type="PIRSF" id="PIRSF005261">
    <property type="entry name" value="Heat_shock_Hsp33"/>
    <property type="match status" value="1"/>
</dbReference>
<dbReference type="SUPFAM" id="SSF64397">
    <property type="entry name" value="Hsp33 domain"/>
    <property type="match status" value="1"/>
</dbReference>
<dbReference type="SUPFAM" id="SSF118352">
    <property type="entry name" value="HSP33 redox switch-like"/>
    <property type="match status" value="1"/>
</dbReference>
<sequence length="300" mass="33341">MTDLPDTDFTQRFIFDENDARGELVSLERSYAEVLAKHPYPEPVAQLLGELMAAASLLVGTMKFDGLLILQARSEGPVPMLMIECSSEREIRGLARYEADQIAPDATLSDLMANGVLAITVDPTEGQRYQGIVDLDGETLSDCFTNYFVMSQQVGTKFWLNADGKRARGLLLQQLPADRIKDDDERTDSWRKLTALAGTLTAEELLGLDNETILHRLYHEEAVRLFEEQSLRFNCSCSRERSANALVSLGLEDAQNLVVEHGGNIEIDCQFCNERYLFDAADVAQLFAGAGIDSPSDTRH</sequence>
<reference key="1">
    <citation type="journal article" date="2009" name="Genome Biol.">
        <title>Genomic and genetic analyses of diversity and plant interactions of Pseudomonas fluorescens.</title>
        <authorList>
            <person name="Silby M.W."/>
            <person name="Cerdeno-Tarraga A.M."/>
            <person name="Vernikos G.S."/>
            <person name="Giddens S.R."/>
            <person name="Jackson R.W."/>
            <person name="Preston G.M."/>
            <person name="Zhang X.-X."/>
            <person name="Moon C.D."/>
            <person name="Gehrig S.M."/>
            <person name="Godfrey S.A.C."/>
            <person name="Knight C.G."/>
            <person name="Malone J.G."/>
            <person name="Robinson Z."/>
            <person name="Spiers A.J."/>
            <person name="Harris S."/>
            <person name="Challis G.L."/>
            <person name="Yaxley A.M."/>
            <person name="Harris D."/>
            <person name="Seeger K."/>
            <person name="Murphy L."/>
            <person name="Rutter S."/>
            <person name="Squares R."/>
            <person name="Quail M.A."/>
            <person name="Saunders E."/>
            <person name="Mavromatis K."/>
            <person name="Brettin T.S."/>
            <person name="Bentley S.D."/>
            <person name="Hothersall J."/>
            <person name="Stephens E."/>
            <person name="Thomas C.M."/>
            <person name="Parkhill J."/>
            <person name="Levy S.B."/>
            <person name="Rainey P.B."/>
            <person name="Thomson N.R."/>
        </authorList>
    </citation>
    <scope>NUCLEOTIDE SEQUENCE [LARGE SCALE GENOMIC DNA]</scope>
    <source>
        <strain>SBW25</strain>
    </source>
</reference>
<protein>
    <recommendedName>
        <fullName evidence="1">33 kDa chaperonin</fullName>
    </recommendedName>
    <alternativeName>
        <fullName evidence="1">Heat shock protein 33 homolog</fullName>
        <shortName evidence="1">HSP33</shortName>
    </alternativeName>
</protein>
<feature type="chain" id="PRO_1000203001" description="33 kDa chaperonin">
    <location>
        <begin position="1"/>
        <end position="300"/>
    </location>
</feature>
<feature type="disulfide bond" description="Redox-active" evidence="1">
    <location>
        <begin position="235"/>
        <end position="237"/>
    </location>
</feature>
<feature type="disulfide bond" description="Redox-active" evidence="1">
    <location>
        <begin position="269"/>
        <end position="272"/>
    </location>
</feature>
<evidence type="ECO:0000255" key="1">
    <source>
        <dbReference type="HAMAP-Rule" id="MF_00117"/>
    </source>
</evidence>
<gene>
    <name evidence="1" type="primary">hslO</name>
    <name type="ordered locus">PFLU_0266</name>
</gene>
<proteinExistence type="inferred from homology"/>